<dbReference type="EC" id="2.5.1.55" evidence="1"/>
<dbReference type="EMBL" id="CP000783">
    <property type="protein sequence ID" value="ABU76760.1"/>
    <property type="molecule type" value="Genomic_DNA"/>
</dbReference>
<dbReference type="RefSeq" id="WP_004388052.1">
    <property type="nucleotide sequence ID" value="NC_009778.1"/>
</dbReference>
<dbReference type="SMR" id="A7MKA7"/>
<dbReference type="GeneID" id="56730358"/>
<dbReference type="KEGG" id="esa:ESA_01502"/>
<dbReference type="HOGENOM" id="CLU_036666_0_0_6"/>
<dbReference type="UniPathway" id="UPA00030"/>
<dbReference type="UniPathway" id="UPA00357">
    <property type="reaction ID" value="UER00474"/>
</dbReference>
<dbReference type="Proteomes" id="UP000000260">
    <property type="component" value="Chromosome"/>
</dbReference>
<dbReference type="GO" id="GO:0005737">
    <property type="term" value="C:cytoplasm"/>
    <property type="evidence" value="ECO:0007669"/>
    <property type="project" value="UniProtKB-SubCell"/>
</dbReference>
<dbReference type="GO" id="GO:0008676">
    <property type="term" value="F:3-deoxy-8-phosphooctulonate synthase activity"/>
    <property type="evidence" value="ECO:0007669"/>
    <property type="project" value="UniProtKB-UniRule"/>
</dbReference>
<dbReference type="GO" id="GO:0019294">
    <property type="term" value="P:keto-3-deoxy-D-manno-octulosonic acid biosynthetic process"/>
    <property type="evidence" value="ECO:0007669"/>
    <property type="project" value="UniProtKB-UniRule"/>
</dbReference>
<dbReference type="FunFam" id="3.20.20.70:FF:000058">
    <property type="entry name" value="2-dehydro-3-deoxyphosphooctonate aldolase"/>
    <property type="match status" value="1"/>
</dbReference>
<dbReference type="Gene3D" id="3.20.20.70">
    <property type="entry name" value="Aldolase class I"/>
    <property type="match status" value="1"/>
</dbReference>
<dbReference type="HAMAP" id="MF_00056">
    <property type="entry name" value="KDO8P_synth"/>
    <property type="match status" value="1"/>
</dbReference>
<dbReference type="InterPro" id="IPR013785">
    <property type="entry name" value="Aldolase_TIM"/>
</dbReference>
<dbReference type="InterPro" id="IPR006218">
    <property type="entry name" value="DAHP1/KDSA"/>
</dbReference>
<dbReference type="InterPro" id="IPR006269">
    <property type="entry name" value="KDO8P_synthase"/>
</dbReference>
<dbReference type="NCBIfam" id="TIGR01362">
    <property type="entry name" value="KDO8P_synth"/>
    <property type="match status" value="1"/>
</dbReference>
<dbReference type="NCBIfam" id="NF003543">
    <property type="entry name" value="PRK05198.1"/>
    <property type="match status" value="1"/>
</dbReference>
<dbReference type="NCBIfam" id="NF009109">
    <property type="entry name" value="PRK12457.1"/>
    <property type="match status" value="1"/>
</dbReference>
<dbReference type="PANTHER" id="PTHR21057">
    <property type="entry name" value="PHOSPHO-2-DEHYDRO-3-DEOXYHEPTONATE ALDOLASE"/>
    <property type="match status" value="1"/>
</dbReference>
<dbReference type="Pfam" id="PF00793">
    <property type="entry name" value="DAHP_synth_1"/>
    <property type="match status" value="1"/>
</dbReference>
<dbReference type="SUPFAM" id="SSF51569">
    <property type="entry name" value="Aldolase"/>
    <property type="match status" value="1"/>
</dbReference>
<name>KDSA_CROS8</name>
<evidence type="ECO:0000255" key="1">
    <source>
        <dbReference type="HAMAP-Rule" id="MF_00056"/>
    </source>
</evidence>
<comment type="catalytic activity">
    <reaction evidence="1">
        <text>D-arabinose 5-phosphate + phosphoenolpyruvate + H2O = 3-deoxy-alpha-D-manno-2-octulosonate-8-phosphate + phosphate</text>
        <dbReference type="Rhea" id="RHEA:14053"/>
        <dbReference type="ChEBI" id="CHEBI:15377"/>
        <dbReference type="ChEBI" id="CHEBI:43474"/>
        <dbReference type="ChEBI" id="CHEBI:57693"/>
        <dbReference type="ChEBI" id="CHEBI:58702"/>
        <dbReference type="ChEBI" id="CHEBI:85985"/>
        <dbReference type="EC" id="2.5.1.55"/>
    </reaction>
</comment>
<comment type="pathway">
    <text evidence="1">Carbohydrate biosynthesis; 3-deoxy-D-manno-octulosonate biosynthesis; 3-deoxy-D-manno-octulosonate from D-ribulose 5-phosphate: step 2/3.</text>
</comment>
<comment type="pathway">
    <text evidence="1">Bacterial outer membrane biogenesis; lipopolysaccharide biosynthesis.</text>
</comment>
<comment type="subcellular location">
    <subcellularLocation>
        <location evidence="1">Cytoplasm</location>
    </subcellularLocation>
</comment>
<comment type="similarity">
    <text evidence="1">Belongs to the KdsA family.</text>
</comment>
<organism>
    <name type="scientific">Cronobacter sakazakii (strain ATCC BAA-894)</name>
    <name type="common">Enterobacter sakazakii</name>
    <dbReference type="NCBI Taxonomy" id="290339"/>
    <lineage>
        <taxon>Bacteria</taxon>
        <taxon>Pseudomonadati</taxon>
        <taxon>Pseudomonadota</taxon>
        <taxon>Gammaproteobacteria</taxon>
        <taxon>Enterobacterales</taxon>
        <taxon>Enterobacteriaceae</taxon>
        <taxon>Cronobacter</taxon>
    </lineage>
</organism>
<keyword id="KW-0963">Cytoplasm</keyword>
<keyword id="KW-0448">Lipopolysaccharide biosynthesis</keyword>
<keyword id="KW-1185">Reference proteome</keyword>
<keyword id="KW-0808">Transferase</keyword>
<sequence>MKQKVVSIGDINVANDLPFVLFGGMNVLESRDLAMRICEHYVTVTQKLGIPYVFKASFDKANRSSIHSYRGPGLEEGMKIFQELKQTFGVKIITDVHTAEQAQPVADVVDVIQLPAFLARQTDLVEAMAKTGAVINVKKPQFISPGQIGNIVDKFKEGGNEQVILCDRGTNFGYDNLVVDMLGFGVMKKVSGNAPVIFDVTHALQCRDPFGAASSGRRAQVTELARAGMATGLAGLFIEAHPDPENAKCDGPSALPLAKLEAFLTQIKAIDDLVKSFPELDTEH</sequence>
<proteinExistence type="inferred from homology"/>
<feature type="chain" id="PRO_1000003334" description="2-dehydro-3-deoxyphosphooctonate aldolase">
    <location>
        <begin position="1"/>
        <end position="284"/>
    </location>
</feature>
<accession>A7MKA7</accession>
<reference key="1">
    <citation type="journal article" date="2010" name="PLoS ONE">
        <title>Genome sequence of Cronobacter sakazakii BAA-894 and comparative genomic hybridization analysis with other Cronobacter species.</title>
        <authorList>
            <person name="Kucerova E."/>
            <person name="Clifton S.W."/>
            <person name="Xia X.Q."/>
            <person name="Long F."/>
            <person name="Porwollik S."/>
            <person name="Fulton L."/>
            <person name="Fronick C."/>
            <person name="Minx P."/>
            <person name="Kyung K."/>
            <person name="Warren W."/>
            <person name="Fulton R."/>
            <person name="Feng D."/>
            <person name="Wollam A."/>
            <person name="Shah N."/>
            <person name="Bhonagiri V."/>
            <person name="Nash W.E."/>
            <person name="Hallsworth-Pepin K."/>
            <person name="Wilson R.K."/>
            <person name="McClelland M."/>
            <person name="Forsythe S.J."/>
        </authorList>
    </citation>
    <scope>NUCLEOTIDE SEQUENCE [LARGE SCALE GENOMIC DNA]</scope>
    <source>
        <strain>ATCC BAA-894</strain>
    </source>
</reference>
<protein>
    <recommendedName>
        <fullName evidence="1">2-dehydro-3-deoxyphosphooctonate aldolase</fullName>
        <ecNumber evidence="1">2.5.1.55</ecNumber>
    </recommendedName>
    <alternativeName>
        <fullName evidence="1">3-deoxy-D-manno-octulosonic acid 8-phosphate synthase</fullName>
    </alternativeName>
    <alternativeName>
        <fullName evidence="1">KDO-8-phosphate synthase</fullName>
        <shortName evidence="1">KDO 8-P synthase</shortName>
        <shortName evidence="1">KDOPS</shortName>
    </alternativeName>
    <alternativeName>
        <fullName evidence="1">Phospho-2-dehydro-3-deoxyoctonate aldolase</fullName>
    </alternativeName>
</protein>
<gene>
    <name evidence="1" type="primary">kdsA</name>
    <name type="ordered locus">ESA_01502</name>
</gene>